<proteinExistence type="inferred from homology"/>
<protein>
    <recommendedName>
        <fullName evidence="1">Cytochrome b559 subunit beta</fullName>
    </recommendedName>
    <alternativeName>
        <fullName evidence="1">PSII reaction center subunit VI</fullName>
    </alternativeName>
</protein>
<dbReference type="EMBL" id="AF041468">
    <property type="protein sequence ID" value="AAC35656.1"/>
    <property type="molecule type" value="Genomic_DNA"/>
</dbReference>
<dbReference type="RefSeq" id="NP_050722.1">
    <property type="nucleotide sequence ID" value="NC_000926.1"/>
</dbReference>
<dbReference type="SMR" id="O78465"/>
<dbReference type="GeneID" id="857025"/>
<dbReference type="HOGENOM" id="CLU_211753_1_0_1"/>
<dbReference type="GO" id="GO:0009535">
    <property type="term" value="C:chloroplast thylakoid membrane"/>
    <property type="evidence" value="ECO:0007669"/>
    <property type="project" value="UniProtKB-SubCell"/>
</dbReference>
<dbReference type="GO" id="GO:0009539">
    <property type="term" value="C:photosystem II reaction center"/>
    <property type="evidence" value="ECO:0007669"/>
    <property type="project" value="InterPro"/>
</dbReference>
<dbReference type="GO" id="GO:0009055">
    <property type="term" value="F:electron transfer activity"/>
    <property type="evidence" value="ECO:0007669"/>
    <property type="project" value="UniProtKB-UniRule"/>
</dbReference>
<dbReference type="GO" id="GO:0020037">
    <property type="term" value="F:heme binding"/>
    <property type="evidence" value="ECO:0007669"/>
    <property type="project" value="InterPro"/>
</dbReference>
<dbReference type="GO" id="GO:0005506">
    <property type="term" value="F:iron ion binding"/>
    <property type="evidence" value="ECO:0007669"/>
    <property type="project" value="UniProtKB-UniRule"/>
</dbReference>
<dbReference type="GO" id="GO:0009767">
    <property type="term" value="P:photosynthetic electron transport chain"/>
    <property type="evidence" value="ECO:0007669"/>
    <property type="project" value="InterPro"/>
</dbReference>
<dbReference type="HAMAP" id="MF_00643">
    <property type="entry name" value="PSII_PsbF"/>
    <property type="match status" value="1"/>
</dbReference>
<dbReference type="InterPro" id="IPR006241">
    <property type="entry name" value="PSII_cyt_b559_bsu"/>
</dbReference>
<dbReference type="InterPro" id="IPR006216">
    <property type="entry name" value="PSII_cyt_b559_CS"/>
</dbReference>
<dbReference type="InterPro" id="IPR013081">
    <property type="entry name" value="PSII_cyt_b559_N"/>
</dbReference>
<dbReference type="NCBIfam" id="TIGR01333">
    <property type="entry name" value="cyt_b559_beta"/>
    <property type="match status" value="1"/>
</dbReference>
<dbReference type="Pfam" id="PF00283">
    <property type="entry name" value="Cytochrom_B559"/>
    <property type="match status" value="1"/>
</dbReference>
<dbReference type="PIRSF" id="PIRSF000037">
    <property type="entry name" value="PsbF"/>
    <property type="match status" value="1"/>
</dbReference>
<dbReference type="SUPFAM" id="SSF161045">
    <property type="entry name" value="Cytochrome b559 subunits"/>
    <property type="match status" value="1"/>
</dbReference>
<dbReference type="PROSITE" id="PS00537">
    <property type="entry name" value="CYTOCHROME_B559"/>
    <property type="match status" value="1"/>
</dbReference>
<organism>
    <name type="scientific">Guillardia theta</name>
    <name type="common">Cryptophyte</name>
    <name type="synonym">Cryptomonas phi</name>
    <dbReference type="NCBI Taxonomy" id="55529"/>
    <lineage>
        <taxon>Eukaryota</taxon>
        <taxon>Cryptophyceae</taxon>
        <taxon>Pyrenomonadales</taxon>
        <taxon>Geminigeraceae</taxon>
        <taxon>Guillardia</taxon>
    </lineage>
</organism>
<reference key="1">
    <citation type="journal article" date="1999" name="J. Mol. Evol.">
        <title>The plastid genome of the cryptophyte alga, Guillardia theta: complete sequence and conserved synteny groups confirm its common ancestry with red algae.</title>
        <authorList>
            <person name="Douglas S.E."/>
            <person name="Penny S.L."/>
        </authorList>
    </citation>
    <scope>NUCLEOTIDE SEQUENCE [LARGE SCALE GENOMIC DNA]</scope>
</reference>
<gene>
    <name evidence="1" type="primary">psbF</name>
</gene>
<accession>O78465</accession>
<name>PSBF_GUITH</name>
<keyword id="KW-0150">Chloroplast</keyword>
<keyword id="KW-0249">Electron transport</keyword>
<keyword id="KW-0349">Heme</keyword>
<keyword id="KW-0408">Iron</keyword>
<keyword id="KW-0472">Membrane</keyword>
<keyword id="KW-0479">Metal-binding</keyword>
<keyword id="KW-0602">Photosynthesis</keyword>
<keyword id="KW-0604">Photosystem II</keyword>
<keyword id="KW-0934">Plastid</keyword>
<keyword id="KW-0793">Thylakoid</keyword>
<keyword id="KW-0812">Transmembrane</keyword>
<keyword id="KW-1133">Transmembrane helix</keyword>
<keyword id="KW-0813">Transport</keyword>
<evidence type="ECO:0000255" key="1">
    <source>
        <dbReference type="HAMAP-Rule" id="MF_00643"/>
    </source>
</evidence>
<sequence length="42" mass="4856">MSKIKQPISYPIFTFRWLAIHGLAVPTVFFLGAITSMQFIQR</sequence>
<feature type="chain" id="PRO_0000200395" description="Cytochrome b559 subunit beta">
    <location>
        <begin position="1"/>
        <end position="42"/>
    </location>
</feature>
<feature type="transmembrane region" description="Helical" evidence="1">
    <location>
        <begin position="17"/>
        <end position="33"/>
    </location>
</feature>
<feature type="binding site" description="axial binding residue" evidence="1">
    <location>
        <position position="21"/>
    </location>
    <ligand>
        <name>heme</name>
        <dbReference type="ChEBI" id="CHEBI:30413"/>
        <note>ligand shared with alpha subunit</note>
    </ligand>
    <ligandPart>
        <name>Fe</name>
        <dbReference type="ChEBI" id="CHEBI:18248"/>
    </ligandPart>
</feature>
<geneLocation type="chloroplast"/>
<comment type="function">
    <text evidence="1">This b-type cytochrome is tightly associated with the reaction center of photosystem II (PSII). PSII is a light-driven water:plastoquinone oxidoreductase that uses light energy to abstract electrons from H(2)O, generating O(2) and a proton gradient subsequently used for ATP formation. It consists of a core antenna complex that captures photons, and an electron transfer chain that converts photonic excitation into a charge separation.</text>
</comment>
<comment type="cofactor">
    <cofactor evidence="1">
        <name>heme b</name>
        <dbReference type="ChEBI" id="CHEBI:60344"/>
    </cofactor>
    <text evidence="1">With its partner (PsbE) binds heme. PSII binds additional chlorophylls, carotenoids and specific lipids.</text>
</comment>
<comment type="subunit">
    <text evidence="1">Heterodimer of an alpha subunit and a beta subunit. PSII is composed of 1 copy each of membrane proteins PsbA, PsbB, PsbC, PsbD, PsbE, PsbF, PsbH, PsbI, PsbJ, PsbK, PsbL, PsbM, PsbT, PsbX, PsbY, PsbZ, Psb30/Ycf12, at least 3 peripheral proteins of the oxygen-evolving complex and a large number of cofactors. It forms dimeric complexes.</text>
</comment>
<comment type="subcellular location">
    <subcellularLocation>
        <location evidence="1">Plastid</location>
        <location evidence="1">Chloroplast thylakoid membrane</location>
        <topology evidence="1">Single-pass membrane protein</topology>
    </subcellularLocation>
</comment>
<comment type="similarity">
    <text evidence="1">Belongs to the PsbE/PsbF family.</text>
</comment>